<gene>
    <name type="ORF">C1</name>
</gene>
<accession>Q91MG1</accession>
<dbReference type="EC" id="3.1.21.-"/>
<dbReference type="EMBL" id="AF329888">
    <property type="protein sequence ID" value="AAK73469.1"/>
    <property type="molecule type" value="Genomic_DNA"/>
</dbReference>
<dbReference type="SMR" id="Q91MG1"/>
<dbReference type="Proteomes" id="UP000007780">
    <property type="component" value="Genome"/>
</dbReference>
<dbReference type="GO" id="GO:0030430">
    <property type="term" value="C:host cell cytoplasm"/>
    <property type="evidence" value="ECO:0007669"/>
    <property type="project" value="UniProtKB-SubCell"/>
</dbReference>
<dbReference type="GO" id="GO:0042025">
    <property type="term" value="C:host cell nucleus"/>
    <property type="evidence" value="ECO:0007669"/>
    <property type="project" value="UniProtKB-SubCell"/>
</dbReference>
<dbReference type="GO" id="GO:0003677">
    <property type="term" value="F:DNA binding"/>
    <property type="evidence" value="ECO:0007669"/>
    <property type="project" value="UniProtKB-KW"/>
</dbReference>
<dbReference type="GO" id="GO:0016888">
    <property type="term" value="F:endodeoxyribonuclease activity, producing 5'-phosphomonoesters"/>
    <property type="evidence" value="ECO:0007669"/>
    <property type="project" value="InterPro"/>
</dbReference>
<dbReference type="GO" id="GO:0046872">
    <property type="term" value="F:metal ion binding"/>
    <property type="evidence" value="ECO:0007669"/>
    <property type="project" value="UniProtKB-KW"/>
</dbReference>
<dbReference type="GO" id="GO:0000166">
    <property type="term" value="F:nucleotide binding"/>
    <property type="evidence" value="ECO:0007669"/>
    <property type="project" value="UniProtKB-KW"/>
</dbReference>
<dbReference type="GO" id="GO:0016779">
    <property type="term" value="F:nucleotidyltransferase activity"/>
    <property type="evidence" value="ECO:0007669"/>
    <property type="project" value="UniProtKB-KW"/>
</dbReference>
<dbReference type="GO" id="GO:0005198">
    <property type="term" value="F:structural molecule activity"/>
    <property type="evidence" value="ECO:0007669"/>
    <property type="project" value="InterPro"/>
</dbReference>
<dbReference type="GO" id="GO:0006260">
    <property type="term" value="P:DNA replication"/>
    <property type="evidence" value="ECO:0007669"/>
    <property type="project" value="UniProtKB-KW"/>
</dbReference>
<dbReference type="GO" id="GO:0039645">
    <property type="term" value="P:symbiont-mediated perturbation of host cell cycle G1/S transition checkpoint"/>
    <property type="evidence" value="ECO:0007669"/>
    <property type="project" value="UniProtKB-KW"/>
</dbReference>
<dbReference type="Gene3D" id="3.40.1310.20">
    <property type="match status" value="1"/>
</dbReference>
<dbReference type="InterPro" id="IPR049912">
    <property type="entry name" value="CRESS_DNA_REP"/>
</dbReference>
<dbReference type="InterPro" id="IPR001146">
    <property type="entry name" value="Gemini_AL1_MSV"/>
</dbReference>
<dbReference type="InterPro" id="IPR001191">
    <property type="entry name" value="Gemini_AL1_REP"/>
</dbReference>
<dbReference type="InterPro" id="IPR022692">
    <property type="entry name" value="Gemini_AL1_REP_central"/>
</dbReference>
<dbReference type="Pfam" id="PF00799">
    <property type="entry name" value="Gemini_AL1"/>
    <property type="match status" value="1"/>
</dbReference>
<dbReference type="Pfam" id="PF08283">
    <property type="entry name" value="Gemini_AL1_M"/>
    <property type="match status" value="1"/>
</dbReference>
<dbReference type="PRINTS" id="PR00227">
    <property type="entry name" value="GEMCOATAL1"/>
</dbReference>
<dbReference type="PRINTS" id="PR00229">
    <property type="entry name" value="GEMCOATMSVL1"/>
</dbReference>
<dbReference type="SUPFAM" id="SSF55464">
    <property type="entry name" value="Origin of replication-binding domain, RBD-like"/>
    <property type="match status" value="1"/>
</dbReference>
<dbReference type="PROSITE" id="PS52020">
    <property type="entry name" value="CRESS_DNA_REP"/>
    <property type="match status" value="1"/>
</dbReference>
<proteinExistence type="inferred from homology"/>
<feature type="chain" id="PRO_0000316939" description="Replication-associated protein A">
    <location>
        <begin position="1"/>
        <end position="271"/>
    </location>
</feature>
<feature type="domain" description="CRESS-DNA virus Rep endonuclease" evidence="2">
    <location>
        <begin position="11"/>
        <end position="114"/>
    </location>
</feature>
<feature type="region of interest" description="Oligomerization" evidence="1">
    <location>
        <begin position="174"/>
        <end position="186"/>
    </location>
</feature>
<feature type="region of interest" description="Binding to RBR1" evidence="1">
    <location>
        <begin position="197"/>
        <end position="201"/>
    </location>
</feature>
<feature type="region of interest" description="Transactivation" evidence="1">
    <location>
        <begin position="220"/>
        <end position="229"/>
    </location>
</feature>
<feature type="region of interest" description="Disordered" evidence="3">
    <location>
        <begin position="244"/>
        <end position="271"/>
    </location>
</feature>
<feature type="short sequence motif" description="RCR-1" evidence="2">
    <location>
        <begin position="18"/>
        <end position="21"/>
    </location>
</feature>
<feature type="short sequence motif" description="RCR-2" evidence="2">
    <location>
        <begin position="60"/>
        <end position="62"/>
    </location>
</feature>
<feature type="short sequence motif" description="RCR-3" evidence="2">
    <location>
        <begin position="100"/>
        <end position="103"/>
    </location>
</feature>
<feature type="compositionally biased region" description="Polar residues" evidence="3">
    <location>
        <begin position="244"/>
        <end position="264"/>
    </location>
</feature>
<feature type="active site" description="For DNA cleavage activity" evidence="2">
    <location>
        <position position="100"/>
    </location>
</feature>
<feature type="binding site" evidence="2">
    <location>
        <position position="52"/>
    </location>
    <ligand>
        <name>a divalent metal cation</name>
        <dbReference type="ChEBI" id="CHEBI:60240"/>
    </ligand>
</feature>
<feature type="binding site" evidence="2">
    <location>
        <position position="60"/>
    </location>
    <ligand>
        <name>a divalent metal cation</name>
        <dbReference type="ChEBI" id="CHEBI:60240"/>
    </ligand>
</feature>
<feature type="binding site" evidence="2">
    <location>
        <position position="62"/>
    </location>
    <ligand>
        <name>a divalent metal cation</name>
        <dbReference type="ChEBI" id="CHEBI:60240"/>
    </ligand>
</feature>
<feature type="binding site" evidence="2">
    <location>
        <position position="104"/>
    </location>
    <ligand>
        <name>a divalent metal cation</name>
        <dbReference type="ChEBI" id="CHEBI:60240"/>
    </ligand>
</feature>
<name>REPA_MSVPA</name>
<protein>
    <recommendedName>
        <fullName>Replication-associated protein A</fullName>
        <shortName>RepA</shortName>
        <ecNumber>3.1.21.-</ecNumber>
    </recommendedName>
</protein>
<organismHost>
    <name type="scientific">Avena sativa</name>
    <name type="common">Oat</name>
    <dbReference type="NCBI Taxonomy" id="4498"/>
</organismHost>
<organismHost>
    <name type="scientific">Axonopus compressus</name>
    <dbReference type="NCBI Taxonomy" id="217170"/>
</organismHost>
<organismHost>
    <name type="scientific">Cenchrus americanus</name>
    <name type="common">Pearl millet</name>
    <name type="synonym">Pennisetum glaucum</name>
    <dbReference type="NCBI Taxonomy" id="4543"/>
</organismHost>
<organismHost>
    <name type="scientific">Cenchrus polystachios</name>
    <dbReference type="NCBI Taxonomy" id="281129"/>
</organismHost>
<organismHost>
    <name type="scientific">Coix lacryma-jobi</name>
    <name type="common">Job's tears</name>
    <dbReference type="NCBI Taxonomy" id="4505"/>
</organismHost>
<organismHost>
    <name type="scientific">Dactyloctenium aegyptium</name>
    <dbReference type="NCBI Taxonomy" id="270102"/>
</organismHost>
<organismHost>
    <name type="scientific">Digitaria</name>
    <dbReference type="NCBI Taxonomy" id="66017"/>
</organismHost>
<organismHost>
    <name type="scientific">Echinochloa colona</name>
    <dbReference type="NCBI Taxonomy" id="90396"/>
</organismHost>
<organismHost>
    <name type="scientific">Eleusine coracana</name>
    <name type="common">Indian finger millet</name>
    <name type="synonym">Ragi</name>
    <dbReference type="NCBI Taxonomy" id="4511"/>
</organismHost>
<organismHost>
    <name type="scientific">Eleusine indica</name>
    <name type="common">Goosegrass</name>
    <name type="synonym">Cynosurus indicus</name>
    <dbReference type="NCBI Taxonomy" id="29674"/>
</organismHost>
<organismHost>
    <name type="scientific">Hordeum vulgare</name>
    <name type="common">Barley</name>
    <dbReference type="NCBI Taxonomy" id="4513"/>
</organismHost>
<organismHost>
    <name type="scientific">Megathyrsus maximus</name>
    <dbReference type="NCBI Taxonomy" id="59788"/>
</organismHost>
<organismHost>
    <name type="scientific">Melinis repens</name>
    <name type="common">Red Natal grass</name>
    <name type="synonym">Rhynchelytrum repens</name>
    <dbReference type="NCBI Taxonomy" id="29709"/>
</organismHost>
<organismHost>
    <name type="scientific">Oryza glaberrima</name>
    <name type="common">African rice</name>
    <dbReference type="NCBI Taxonomy" id="4538"/>
</organismHost>
<organismHost>
    <name type="scientific">Oryza sativa</name>
    <name type="common">Rice</name>
    <dbReference type="NCBI Taxonomy" id="4530"/>
</organismHost>
<organismHost>
    <name type="scientific">Paspalum conjugatum</name>
    <name type="common">Hilo grass</name>
    <dbReference type="NCBI Taxonomy" id="158143"/>
</organismHost>
<organismHost>
    <name type="scientific">Paspalum notatum</name>
    <name type="common">Bahia grass</name>
    <dbReference type="NCBI Taxonomy" id="147272"/>
</organismHost>
<organismHost>
    <name type="scientific">Paspalum scrobiculatum</name>
    <dbReference type="NCBI Taxonomy" id="173849"/>
</organismHost>
<organismHost>
    <name type="scientific">Rottboellia cochinchinensis</name>
    <dbReference type="NCBI Taxonomy" id="300125"/>
</organismHost>
<organismHost>
    <name type="scientific">Saccharum officinarum</name>
    <name type="common">Sugarcane</name>
    <dbReference type="NCBI Taxonomy" id="4547"/>
</organismHost>
<organismHost>
    <name type="scientific">Setaria barbata</name>
    <dbReference type="NCBI Taxonomy" id="192628"/>
</organismHost>
<organismHost>
    <name type="scientific">Triticum aestivum</name>
    <name type="common">Wheat</name>
    <dbReference type="NCBI Taxonomy" id="4565"/>
</organismHost>
<organismHost>
    <name type="scientific">Urochloa deflexa</name>
    <dbReference type="NCBI Taxonomy" id="240436"/>
</organismHost>
<organismHost>
    <name type="scientific">Zea mays</name>
    <name type="common">Maize</name>
    <dbReference type="NCBI Taxonomy" id="4577"/>
</organismHost>
<organism>
    <name type="scientific">Maize streak virus genotype E (isolate Pat)</name>
    <name type="common">MSV</name>
    <dbReference type="NCBI Taxonomy" id="268331"/>
    <lineage>
        <taxon>Viruses</taxon>
        <taxon>Monodnaviria</taxon>
        <taxon>Shotokuvirae</taxon>
        <taxon>Cressdnaviricota</taxon>
        <taxon>Repensiviricetes</taxon>
        <taxon>Geplafuvirales</taxon>
        <taxon>Geminiviridae</taxon>
        <taxon>Mastrevirus</taxon>
        <taxon>Maize streak virus</taxon>
    </lineage>
</organism>
<reference key="1">
    <citation type="journal article" date="2001" name="Virology">
        <title>Sequence diversity and virulence in Zea mays of Maize streak virus isolates.</title>
        <authorList>
            <person name="Martin D.P."/>
            <person name="Willment J.A."/>
            <person name="Billharz R."/>
            <person name="Velders R."/>
            <person name="Odhiambo B."/>
            <person name="Njuguna J."/>
            <person name="James D."/>
            <person name="Rybicki E.P."/>
        </authorList>
    </citation>
    <scope>NUCLEOTIDE SEQUENCE [GENOMIC DNA]</scope>
</reference>
<comment type="function">
    <text evidence="1">Implicated in enhancement of V-sense gene expression. Acts a an inhibitor of C-sense gene transcription (By similarity).</text>
</comment>
<comment type="cofactor">
    <cofactor evidence="2">
        <name>Mg(2+)</name>
        <dbReference type="ChEBI" id="CHEBI:18420"/>
    </cofactor>
    <cofactor evidence="2">
        <name>Mn(2+)</name>
        <dbReference type="ChEBI" id="CHEBI:29035"/>
    </cofactor>
    <text evidence="2">Divalent metal cations, possibly Mg(2+) or Mn(2+).</text>
</comment>
<comment type="subunit">
    <text evidence="1">Homooligomer. Interacts with host retinoblastoma-related protein 1 (RBR1), and may thereby deregulate the host cell cycle. Part of the C- and V-complexes which are RepA-Rep-DNA complexes involved in the c-sense and v-sense transcription (By similarity).</text>
</comment>
<comment type="subcellular location">
    <subcellularLocation>
        <location evidence="1">Host nucleus</location>
    </subcellularLocation>
    <subcellularLocation>
        <location evidence="1">Host cytoplasm</location>
    </subcellularLocation>
</comment>
<comment type="alternative products">
    <event type="alternative splicing"/>
    <isoform>
        <id>Q91MG1-1</id>
        <name>RepA</name>
        <sequence type="displayed"/>
    </isoform>
    <isoform>
        <id>Q91MG2-1</id>
        <name>Rep</name>
        <sequence type="external"/>
    </isoform>
</comment>
<comment type="domain">
    <text>There are 3 rolling circle replication (RCR) motifs. RCR-2 may be involved in metal coordination. RCR-3 is required for phosphodiester bond cleavage for initiation of RCR.</text>
</comment>
<comment type="miscellaneous">
    <molecule>Isoform RepA</molecule>
    <text>Produced from the unspliced transcript.</text>
</comment>
<comment type="similarity">
    <text evidence="4">Belongs to the geminiviridae Rep protein family.</text>
</comment>
<evidence type="ECO:0000250" key="1"/>
<evidence type="ECO:0000255" key="2">
    <source>
        <dbReference type="PROSITE-ProRule" id="PRU01364"/>
    </source>
</evidence>
<evidence type="ECO:0000256" key="3">
    <source>
        <dbReference type="SAM" id="MobiDB-lite"/>
    </source>
</evidence>
<evidence type="ECO:0000305" key="4"/>
<keyword id="KW-0010">Activator</keyword>
<keyword id="KW-0025">Alternative splicing</keyword>
<keyword id="KW-0190">Covalent protein-DNA linkage</keyword>
<keyword id="KW-0235">DNA replication</keyword>
<keyword id="KW-0238">DNA-binding</keyword>
<keyword id="KW-0255">Endonuclease</keyword>
<keyword id="KW-1078">G1/S host cell cycle checkpoint dysregulation by virus</keyword>
<keyword id="KW-1035">Host cytoplasm</keyword>
<keyword id="KW-1048">Host nucleus</keyword>
<keyword id="KW-0945">Host-virus interaction</keyword>
<keyword id="KW-0378">Hydrolase</keyword>
<keyword id="KW-0479">Metal-binding</keyword>
<keyword id="KW-1121">Modulation of host cell cycle by virus</keyword>
<keyword id="KW-0540">Nuclease</keyword>
<keyword id="KW-0547">Nucleotide-binding</keyword>
<keyword id="KW-0548">Nucleotidyltransferase</keyword>
<keyword id="KW-0678">Repressor</keyword>
<keyword id="KW-0808">Transferase</keyword>
<sequence>MASSSSNRSFLHRNANTFLTYPHCPENPEIISQKLWDLVARWNPLYIVCAREAHRDGNMHLHALLQTDKPVRTTDARIFDIEGFHPNIQSAKSVNKVRDYILKEPLAVFERGTFIPRKSCFQGNTPPFPKKNPNKDEIMAHIISHATSKQEYLCLVRKEFPYDWATKLQYFEYSANKLFPDIQEEFISPHPPSSPDLLCNESIKDWLQPNIYQVSPEAYMLLQPTCYTVDEAISDLTWMDNLSSQQMKDQESRASTSSVQQGQGNLLGPEV</sequence>